<protein>
    <recommendedName>
        <fullName evidence="1">Tryptophan 2,3-dioxygenase</fullName>
        <shortName evidence="1">TDO</shortName>
        <ecNumber evidence="1">1.13.11.11</ecNumber>
    </recommendedName>
    <alternativeName>
        <fullName evidence="1">Protein vermilion</fullName>
    </alternativeName>
    <alternativeName>
        <fullName evidence="1">Tryptamin 2,3-dioxygenase</fullName>
    </alternativeName>
    <alternativeName>
        <fullName evidence="1">Tryptophan oxygenase</fullName>
        <shortName evidence="1">TO</shortName>
        <shortName evidence="1">TRPO</shortName>
    </alternativeName>
    <alternativeName>
        <fullName evidence="1">Tryptophan pyrrolase</fullName>
    </alternativeName>
    <alternativeName>
        <fullName evidence="1">Tryptophanase</fullName>
    </alternativeName>
</protein>
<comment type="function">
    <text evidence="1">Heme-dependent dioxygenase that catalyzes the oxidative cleavage of the L-tryptophan (L-Trp) pyrrole ring and converts L-tryptophan to N-formyl-L-kynurenine. Catalyzes the oxidative cleavage of the indole moiety.</text>
</comment>
<comment type="catalytic activity">
    <reaction evidence="1">
        <text>L-tryptophan + O2 = N-formyl-L-kynurenine</text>
        <dbReference type="Rhea" id="RHEA:24536"/>
        <dbReference type="ChEBI" id="CHEBI:15379"/>
        <dbReference type="ChEBI" id="CHEBI:57912"/>
        <dbReference type="ChEBI" id="CHEBI:58629"/>
        <dbReference type="EC" id="1.13.11.11"/>
    </reaction>
</comment>
<comment type="cofactor">
    <cofactor evidence="1">
        <name>heme</name>
        <dbReference type="ChEBI" id="CHEBI:30413"/>
    </cofactor>
    <text evidence="1">Binds 1 heme group per subunit.</text>
</comment>
<comment type="pathway">
    <text evidence="1">Amino-acid degradation; L-tryptophan degradation via kynurenine pathway; L-kynurenine from L-tryptophan: step 1/2.</text>
</comment>
<comment type="pathway">
    <text evidence="1">Pigment biosynthesis; ommochrome biosynthesis.</text>
</comment>
<comment type="subunit">
    <text evidence="1">Homotetramer. Dimer of dimers.</text>
</comment>
<comment type="similarity">
    <text evidence="1">Belongs to the tryptophan 2,3-dioxygenase family.</text>
</comment>
<organism>
    <name type="scientific">Drosophila grimshawi</name>
    <name type="common">Hawaiian fruit fly</name>
    <name type="synonym">Idiomyia grimshawi</name>
    <dbReference type="NCBI Taxonomy" id="7222"/>
    <lineage>
        <taxon>Eukaryota</taxon>
        <taxon>Metazoa</taxon>
        <taxon>Ecdysozoa</taxon>
        <taxon>Arthropoda</taxon>
        <taxon>Hexapoda</taxon>
        <taxon>Insecta</taxon>
        <taxon>Pterygota</taxon>
        <taxon>Neoptera</taxon>
        <taxon>Endopterygota</taxon>
        <taxon>Diptera</taxon>
        <taxon>Brachycera</taxon>
        <taxon>Muscomorpha</taxon>
        <taxon>Ephydroidea</taxon>
        <taxon>Drosophilidae</taxon>
        <taxon>Drosophila</taxon>
        <taxon>Hawaiian Drosophila</taxon>
    </lineage>
</organism>
<accession>B4JKK1</accession>
<reference key="1">
    <citation type="journal article" date="2007" name="Nature">
        <title>Evolution of genes and genomes on the Drosophila phylogeny.</title>
        <authorList>
            <consortium name="Drosophila 12 genomes consortium"/>
        </authorList>
    </citation>
    <scope>NUCLEOTIDE SEQUENCE [LARGE SCALE GENOMIC DNA]</scope>
    <source>
        <strain>Tucson 15287-2541.00</strain>
    </source>
</reference>
<gene>
    <name evidence="1" type="primary">v</name>
    <name type="ORF">GH12679</name>
</gene>
<evidence type="ECO:0000255" key="1">
    <source>
        <dbReference type="HAMAP-Rule" id="MF_03020"/>
    </source>
</evidence>
<dbReference type="EC" id="1.13.11.11" evidence="1"/>
<dbReference type="EMBL" id="CH916370">
    <property type="protein sequence ID" value="EDW00104.1"/>
    <property type="molecule type" value="Genomic_DNA"/>
</dbReference>
<dbReference type="SMR" id="B4JKK1"/>
<dbReference type="FunCoup" id="B4JKK1">
    <property type="interactions" value="152"/>
</dbReference>
<dbReference type="STRING" id="7222.B4JKK1"/>
<dbReference type="EnsemblMetazoa" id="FBtr0148093">
    <property type="protein sequence ID" value="FBpp0146585"/>
    <property type="gene ID" value="FBgn0120158"/>
</dbReference>
<dbReference type="EnsemblMetazoa" id="XM_001991443.2">
    <property type="protein sequence ID" value="XP_001991479.1"/>
    <property type="gene ID" value="LOC6564497"/>
</dbReference>
<dbReference type="GeneID" id="6564497"/>
<dbReference type="KEGG" id="dgr:6564497"/>
<dbReference type="CTD" id="136040130"/>
<dbReference type="eggNOG" id="KOG3906">
    <property type="taxonomic scope" value="Eukaryota"/>
</dbReference>
<dbReference type="HOGENOM" id="CLU_045599_1_1_1"/>
<dbReference type="InParanoid" id="B4JKK1"/>
<dbReference type="OMA" id="WRWRNDH"/>
<dbReference type="OrthoDB" id="447477at2759"/>
<dbReference type="PhylomeDB" id="B4JKK1"/>
<dbReference type="UniPathway" id="UPA00271"/>
<dbReference type="UniPathway" id="UPA00333">
    <property type="reaction ID" value="UER00453"/>
</dbReference>
<dbReference type="Proteomes" id="UP000001070">
    <property type="component" value="Unassembled WGS sequence"/>
</dbReference>
<dbReference type="GO" id="GO:0020037">
    <property type="term" value="F:heme binding"/>
    <property type="evidence" value="ECO:0000250"/>
    <property type="project" value="UniProtKB"/>
</dbReference>
<dbReference type="GO" id="GO:0046872">
    <property type="term" value="F:metal ion binding"/>
    <property type="evidence" value="ECO:0007669"/>
    <property type="project" value="UniProtKB-KW"/>
</dbReference>
<dbReference type="GO" id="GO:0004833">
    <property type="term" value="F:tryptophan 2,3-dioxygenase activity"/>
    <property type="evidence" value="ECO:0000250"/>
    <property type="project" value="UniProtKB"/>
</dbReference>
<dbReference type="GO" id="GO:0019442">
    <property type="term" value="P:L-tryptophan catabolic process to acetyl-CoA"/>
    <property type="evidence" value="ECO:0007669"/>
    <property type="project" value="TreeGrafter"/>
</dbReference>
<dbReference type="GO" id="GO:0019441">
    <property type="term" value="P:L-tryptophan catabolic process to kynurenine"/>
    <property type="evidence" value="ECO:0000250"/>
    <property type="project" value="UniProtKB"/>
</dbReference>
<dbReference type="GO" id="GO:0006727">
    <property type="term" value="P:ommochrome biosynthetic process"/>
    <property type="evidence" value="ECO:0007669"/>
    <property type="project" value="UniProtKB-UniRule"/>
</dbReference>
<dbReference type="FunFam" id="1.10.287.3810:FF:000001">
    <property type="entry name" value="Tryptophan 2,3-dioxygenase"/>
    <property type="match status" value="1"/>
</dbReference>
<dbReference type="Gene3D" id="1.10.287.3810">
    <property type="match status" value="1"/>
</dbReference>
<dbReference type="Gene3D" id="1.20.58.480">
    <property type="match status" value="1"/>
</dbReference>
<dbReference type="HAMAP" id="MF_01972">
    <property type="entry name" value="T23O"/>
    <property type="match status" value="1"/>
</dbReference>
<dbReference type="InterPro" id="IPR037217">
    <property type="entry name" value="Trp/Indoleamine_2_3_dOase-like"/>
</dbReference>
<dbReference type="InterPro" id="IPR004981">
    <property type="entry name" value="Trp_2_3_dOase"/>
</dbReference>
<dbReference type="PANTHER" id="PTHR10138">
    <property type="entry name" value="TRYPTOPHAN 2,3-DIOXYGENASE"/>
    <property type="match status" value="1"/>
</dbReference>
<dbReference type="PANTHER" id="PTHR10138:SF0">
    <property type="entry name" value="TRYPTOPHAN 2,3-DIOXYGENASE"/>
    <property type="match status" value="1"/>
</dbReference>
<dbReference type="Pfam" id="PF03301">
    <property type="entry name" value="Trp_dioxygenase"/>
    <property type="match status" value="1"/>
</dbReference>
<dbReference type="SUPFAM" id="SSF140959">
    <property type="entry name" value="Indolic compounds 2,3-dioxygenase-like"/>
    <property type="match status" value="1"/>
</dbReference>
<feature type="chain" id="PRO_0000360876" description="Tryptophan 2,3-dioxygenase">
    <location>
        <begin position="1"/>
        <end position="377"/>
    </location>
</feature>
<feature type="binding site" evidence="1">
    <location>
        <begin position="57"/>
        <end position="61"/>
    </location>
    <ligand>
        <name>substrate</name>
    </ligand>
</feature>
<feature type="binding site" evidence="1">
    <location>
        <position position="128"/>
    </location>
    <ligand>
        <name>substrate</name>
    </ligand>
</feature>
<feature type="binding site" description="axial binding residue" evidence="1">
    <location>
        <position position="313"/>
    </location>
    <ligand>
        <name>heme</name>
        <dbReference type="ChEBI" id="CHEBI:30413"/>
    </ligand>
    <ligandPart>
        <name>Fe</name>
        <dbReference type="ChEBI" id="CHEBI:18248"/>
    </ligandPart>
</feature>
<feature type="binding site" evidence="1">
    <location>
        <position position="328"/>
    </location>
    <ligand>
        <name>substrate</name>
    </ligand>
</feature>
<keyword id="KW-0223">Dioxygenase</keyword>
<keyword id="KW-0349">Heme</keyword>
<keyword id="KW-0408">Iron</keyword>
<keyword id="KW-0479">Metal-binding</keyword>
<keyword id="KW-0560">Oxidoreductase</keyword>
<keyword id="KW-1185">Reference proteome</keyword>
<keyword id="KW-0823">Tryptophan catabolism</keyword>
<name>T23O_DROGR</name>
<sequence>MSCPYAGNSNEHDDAAVPLSNDVGKIYGEYLMLDKLLDAQCMLSMEDKRPVHDEHLFIITHQAYELWFKQIIFEFDSIRDMLDAEVIDETKTLEIVKRLNRVVLILKLLVDQVPILETMTPLDFMDFRKYLAPASGFQSLQFRLIENKLGVLTEQRVKYNQKYSDVFGNDERALNAIRSSEDNPSLLELVQRWLERTPGLEADGFNFWEKFQHSVDQFLAAQVHSALLEPVEQAKNYRLMDIEKRREVYRSIFDPALHEALVKRGDRRFSHGALQGAIMITFYRDEPRFSQPHQLLTLLMDIDSLITKWRYNHVIMVQRMIGSQQLGTGGSSGYQYLRSTLSDRYKVFLDLFNLSTFLIPREAIPPLDESIRQKLIH</sequence>
<proteinExistence type="inferred from homology"/>